<organism>
    <name type="scientific">Bacillus velezensis (strain DSM 23117 / BGSC 10A6 / LMG 26770 / FZB42)</name>
    <name type="common">Bacillus amyloliquefaciens subsp. plantarum</name>
    <dbReference type="NCBI Taxonomy" id="326423"/>
    <lineage>
        <taxon>Bacteria</taxon>
        <taxon>Bacillati</taxon>
        <taxon>Bacillota</taxon>
        <taxon>Bacilli</taxon>
        <taxon>Bacillales</taxon>
        <taxon>Bacillaceae</taxon>
        <taxon>Bacillus</taxon>
        <taxon>Bacillus amyloliquefaciens group</taxon>
    </lineage>
</organism>
<keyword id="KW-0456">Lyase</keyword>
<keyword id="KW-0479">Metal-binding</keyword>
<keyword id="KW-0597">Phosphoprotein</keyword>
<keyword id="KW-0862">Zinc</keyword>
<protein>
    <recommendedName>
        <fullName>6-phospho-5-dehydro-2-deoxy-D-gluconate aldolase</fullName>
        <shortName>DKGP aldolase</shortName>
        <ecNumber>4.1.2.29</ecNumber>
    </recommendedName>
</protein>
<reference key="1">
    <citation type="journal article" date="2007" name="Nat. Biotechnol.">
        <title>Comparative analysis of the complete genome sequence of the plant growth-promoting bacterium Bacillus amyloliquefaciens FZB42.</title>
        <authorList>
            <person name="Chen X.H."/>
            <person name="Koumoutsi A."/>
            <person name="Scholz R."/>
            <person name="Eisenreich A."/>
            <person name="Schneider K."/>
            <person name="Heinemeyer I."/>
            <person name="Morgenstern B."/>
            <person name="Voss B."/>
            <person name="Hess W.R."/>
            <person name="Reva O."/>
            <person name="Junge H."/>
            <person name="Voigt B."/>
            <person name="Jungblut P.R."/>
            <person name="Vater J."/>
            <person name="Suessmuth R."/>
            <person name="Liesegang H."/>
            <person name="Strittmatter A."/>
            <person name="Gottschalk G."/>
            <person name="Borriss R."/>
        </authorList>
    </citation>
    <scope>NUCLEOTIDE SEQUENCE [LARGE SCALE GENOMIC DNA]</scope>
    <source>
        <strain>DSM 23117 / BGSC 10A6 / LMG 26770 / FZB42</strain>
    </source>
</reference>
<proteinExistence type="inferred from homology"/>
<dbReference type="EC" id="4.1.2.29"/>
<dbReference type="EMBL" id="CP000560">
    <property type="protein sequence ID" value="ABS75998.1"/>
    <property type="molecule type" value="Genomic_DNA"/>
</dbReference>
<dbReference type="SMR" id="A7ZAH2"/>
<dbReference type="GeneID" id="93082808"/>
<dbReference type="KEGG" id="bay:RBAM_036690"/>
<dbReference type="HOGENOM" id="CLU_040088_0_1_9"/>
<dbReference type="UniPathway" id="UPA00076">
    <property type="reaction ID" value="UER00147"/>
</dbReference>
<dbReference type="Proteomes" id="UP000001120">
    <property type="component" value="Chromosome"/>
</dbReference>
<dbReference type="GO" id="GO:0047441">
    <property type="term" value="F:5-dehydro-2-deoxyphosphogluconate aldolase activity"/>
    <property type="evidence" value="ECO:0007669"/>
    <property type="project" value="UniProtKB-EC"/>
</dbReference>
<dbReference type="GO" id="GO:0004332">
    <property type="term" value="F:fructose-bisphosphate aldolase activity"/>
    <property type="evidence" value="ECO:0007669"/>
    <property type="project" value="InterPro"/>
</dbReference>
<dbReference type="GO" id="GO:0008270">
    <property type="term" value="F:zinc ion binding"/>
    <property type="evidence" value="ECO:0007669"/>
    <property type="project" value="InterPro"/>
</dbReference>
<dbReference type="GO" id="GO:0030388">
    <property type="term" value="P:fructose 1,6-bisphosphate metabolic process"/>
    <property type="evidence" value="ECO:0007669"/>
    <property type="project" value="InterPro"/>
</dbReference>
<dbReference type="GO" id="GO:0006096">
    <property type="term" value="P:glycolytic process"/>
    <property type="evidence" value="ECO:0007669"/>
    <property type="project" value="InterPro"/>
</dbReference>
<dbReference type="CDD" id="cd00947">
    <property type="entry name" value="TBP_aldolase_IIB"/>
    <property type="match status" value="1"/>
</dbReference>
<dbReference type="Gene3D" id="3.20.20.70">
    <property type="entry name" value="Aldolase class I"/>
    <property type="match status" value="1"/>
</dbReference>
<dbReference type="InterPro" id="IPR013785">
    <property type="entry name" value="Aldolase_TIM"/>
</dbReference>
<dbReference type="InterPro" id="IPR050246">
    <property type="entry name" value="Class_II_FBP_aldolase"/>
</dbReference>
<dbReference type="InterPro" id="IPR000771">
    <property type="entry name" value="FBA_II"/>
</dbReference>
<dbReference type="InterPro" id="IPR011289">
    <property type="entry name" value="Fruc_bis_ald_class-2"/>
</dbReference>
<dbReference type="NCBIfam" id="TIGR00167">
    <property type="entry name" value="cbbA"/>
    <property type="match status" value="1"/>
</dbReference>
<dbReference type="NCBIfam" id="TIGR01859">
    <property type="entry name" value="fruc_bis_ald"/>
    <property type="match status" value="1"/>
</dbReference>
<dbReference type="PANTHER" id="PTHR30304">
    <property type="entry name" value="D-TAGATOSE-1,6-BISPHOSPHATE ALDOLASE"/>
    <property type="match status" value="1"/>
</dbReference>
<dbReference type="PANTHER" id="PTHR30304:SF0">
    <property type="entry name" value="D-TAGATOSE-1,6-BISPHOSPHATE ALDOLASE SUBUNIT GATY-RELATED"/>
    <property type="match status" value="1"/>
</dbReference>
<dbReference type="Pfam" id="PF01116">
    <property type="entry name" value="F_bP_aldolase"/>
    <property type="match status" value="1"/>
</dbReference>
<dbReference type="PIRSF" id="PIRSF001359">
    <property type="entry name" value="F_bP_aldolase_II"/>
    <property type="match status" value="1"/>
</dbReference>
<dbReference type="SUPFAM" id="SSF51569">
    <property type="entry name" value="Aldolase"/>
    <property type="match status" value="1"/>
</dbReference>
<dbReference type="PROSITE" id="PS00602">
    <property type="entry name" value="ALDOLASE_CLASS_II_1"/>
    <property type="match status" value="1"/>
</dbReference>
<dbReference type="PROSITE" id="PS00806">
    <property type="entry name" value="ALDOLASE_CLASS_II_2"/>
    <property type="match status" value="1"/>
</dbReference>
<evidence type="ECO:0000250" key="1"/>
<evidence type="ECO:0000305" key="2"/>
<feature type="chain" id="PRO_0000352280" description="6-phospho-5-dehydro-2-deoxy-D-gluconate aldolase">
    <location>
        <begin position="1"/>
        <end position="290"/>
    </location>
</feature>
<feature type="active site" description="Proton donor" evidence="1">
    <location>
        <position position="85"/>
    </location>
</feature>
<feature type="binding site" evidence="1">
    <location>
        <position position="86"/>
    </location>
    <ligand>
        <name>Zn(2+)</name>
        <dbReference type="ChEBI" id="CHEBI:29105"/>
        <note>catalytic</note>
    </ligand>
</feature>
<feature type="binding site" evidence="1">
    <location>
        <position position="180"/>
    </location>
    <ligand>
        <name>Zn(2+)</name>
        <dbReference type="ChEBI" id="CHEBI:29105"/>
        <note>catalytic</note>
    </ligand>
</feature>
<feature type="binding site" evidence="1">
    <location>
        <position position="181"/>
    </location>
    <ligand>
        <name>dihydroxyacetone phosphate</name>
        <dbReference type="ChEBI" id="CHEBI:57642"/>
    </ligand>
</feature>
<feature type="binding site" evidence="1">
    <location>
        <position position="208"/>
    </location>
    <ligand>
        <name>Zn(2+)</name>
        <dbReference type="ChEBI" id="CHEBI:29105"/>
        <note>catalytic</note>
    </ligand>
</feature>
<feature type="binding site" evidence="1">
    <location>
        <begin position="209"/>
        <end position="211"/>
    </location>
    <ligand>
        <name>dihydroxyacetone phosphate</name>
        <dbReference type="ChEBI" id="CHEBI:57642"/>
    </ligand>
</feature>
<feature type="binding site" evidence="1">
    <location>
        <begin position="230"/>
        <end position="233"/>
    </location>
    <ligand>
        <name>dihydroxyacetone phosphate</name>
        <dbReference type="ChEBI" id="CHEBI:57642"/>
    </ligand>
</feature>
<feature type="modified residue" description="Phosphothreonine" evidence="1">
    <location>
        <position position="233"/>
    </location>
</feature>
<sequence length="290" mass="31357">MAFVTMKHLLAEAKREHYAVGQFNINGLQWTKAILQAAQKEQSPVIAAASDRLVDYLGGFKTISAMVGALMEEMAITVPVVLHLDHGSSAERCRQAIDAGFSSVMIDGSHHPIDENIAMTKEVADYAAKHGVSVEAEVGTVGGMEDGLVGGVRYADVAECERIVKETNIDALAAALGSVHGKYQGEPNLGFKEMEAISRMTDIPLVLHGASGIPQEQIKKAITLGHAKININTECMVAWTDETRRMFQKNGDLYEPRGYMTPGIEAVEETVRSKMREFGSAGKAVKQQVG</sequence>
<name>IOLJ_BACVZ</name>
<comment type="function">
    <text evidence="1">Produces dihydroxyacetone phosphate (DHAP or glycerone phosphate) and malonic semialdehyde (MSA or 3-oxopropanoate) from 6-phospho-5-dehydro-2-deoxy-D-gluconate (DKGP).</text>
</comment>
<comment type="catalytic activity">
    <reaction>
        <text>6-phospho-5-dehydro-2-deoxy-D-gluconate = 3-oxopropanoate + dihydroxyacetone phosphate</text>
        <dbReference type="Rhea" id="RHEA:13177"/>
        <dbReference type="ChEBI" id="CHEBI:33190"/>
        <dbReference type="ChEBI" id="CHEBI:57642"/>
        <dbReference type="ChEBI" id="CHEBI:57949"/>
        <dbReference type="EC" id="4.1.2.29"/>
    </reaction>
</comment>
<comment type="cofactor">
    <cofactor evidence="1">
        <name>Zn(2+)</name>
        <dbReference type="ChEBI" id="CHEBI:29105"/>
    </cofactor>
</comment>
<comment type="pathway">
    <text>Polyol metabolism; myo-inositol degradation into acetyl-CoA; acetyl-CoA from myo-inositol: step 6/7.</text>
</comment>
<comment type="similarity">
    <text evidence="2">Belongs to the class II fructose-bisphosphate aldolase family. IolJ subfamily.</text>
</comment>
<gene>
    <name type="primary">iolJ</name>
    <name type="ordered locus">RBAM_036690</name>
</gene>
<accession>A7ZAH2</accession>